<evidence type="ECO:0000255" key="1">
    <source>
        <dbReference type="HAMAP-Rule" id="MF_01338"/>
    </source>
</evidence>
<evidence type="ECO:0000305" key="2"/>
<gene>
    <name evidence="1" type="primary">rbcL</name>
</gene>
<proteinExistence type="inferred from homology"/>
<geneLocation type="chloroplast"/>
<reference key="1">
    <citation type="journal article" date="2006" name="BMC Plant Biol.">
        <title>Rapid and accurate pyrosequencing of angiosperm plastid genomes.</title>
        <authorList>
            <person name="Moore M.J."/>
            <person name="Dhingra A."/>
            <person name="Soltis P.S."/>
            <person name="Shaw R."/>
            <person name="Farmerie W.G."/>
            <person name="Folta K.M."/>
            <person name="Soltis D.E."/>
        </authorList>
    </citation>
    <scope>NUCLEOTIDE SEQUENCE [LARGE SCALE GENOMIC DNA]</scope>
</reference>
<reference key="2">
    <citation type="journal article" date="1996" name="Syst. Bot.">
        <title>Phylogenetic implications of rbcL and its sequence variation in the Berberidaceae.</title>
        <authorList>
            <person name="Kim Y.-D."/>
            <person name="Jansen R.K."/>
        </authorList>
        <dbReference type="AGRICOLA" id="IND20584463"/>
    </citation>
    <scope>NUCLEOTIDE SEQUENCE [GENOMIC DNA] OF 10-475</scope>
</reference>
<reference key="3">
    <citation type="journal article" date="1995" name="Ann. Mo. Bot. Gard.">
        <title>The utility of atpB gene sequences in resolving phylogenetic relationships: comparison with rbcL and 18S ribosomal DNA sequences in the Lardizabalaceae.</title>
        <authorList>
            <person name="Hoot S.B."/>
            <person name="Culham A."/>
            <person name="Crane P.R."/>
        </authorList>
    </citation>
    <scope>NUCLEOTIDE SEQUENCE [GENOMIC DNA] OF 23-475</scope>
</reference>
<sequence length="475" mass="52677">MSPQTETKASVGFKAGVKDYKLNYYTPDYVTKDTDILAAFRVTPQPGVPPEEAGAAVAAESSTGTWTTVWTDGLTSLDRYKGRCYHIEPVAGEDNQYICYVAYPLDLFEEGSVTNMFTSIVGNVFGFKALRALRLEDLRIPTSYVKTFQGPPHGIQVERDKLNKYGRPLLGCTIKPKLGLSAKNYGRAVYECLRGGLDFTKDDENVNSQPFMRWRDRFLFCAEALFKAQAETGEIKGHYLNATAGTCEEMMKRAVFARELGVPIVMHDYLTGGFTANTTLAHYCRDNGLLLHIHRAMHAVIDRQKNHGIHFRVLAKALRMSGGDHIHAGTVVGKLEGEREITLGFVDLLRDDFIEKDRSRGIYFTQDWVSLPGVLPVASGGIHVWHMPALTEIFGDDSVLQFGGGTLGHPWGNAPGAVANRVALEACVQARNEGRDLAREGNEIIRAACKWSPELAAACEVWKEIKFEFEAMDTL</sequence>
<comment type="function">
    <text evidence="1">RuBisCO catalyzes two reactions: the carboxylation of D-ribulose 1,5-bisphosphate, the primary event in carbon dioxide fixation, as well as the oxidative fragmentation of the pentose substrate in the photorespiration process. Both reactions occur simultaneously and in competition at the same active site.</text>
</comment>
<comment type="catalytic activity">
    <reaction evidence="1">
        <text>2 (2R)-3-phosphoglycerate + 2 H(+) = D-ribulose 1,5-bisphosphate + CO2 + H2O</text>
        <dbReference type="Rhea" id="RHEA:23124"/>
        <dbReference type="ChEBI" id="CHEBI:15377"/>
        <dbReference type="ChEBI" id="CHEBI:15378"/>
        <dbReference type="ChEBI" id="CHEBI:16526"/>
        <dbReference type="ChEBI" id="CHEBI:57870"/>
        <dbReference type="ChEBI" id="CHEBI:58272"/>
        <dbReference type="EC" id="4.1.1.39"/>
    </reaction>
</comment>
<comment type="catalytic activity">
    <reaction evidence="1">
        <text>D-ribulose 1,5-bisphosphate + O2 = 2-phosphoglycolate + (2R)-3-phosphoglycerate + 2 H(+)</text>
        <dbReference type="Rhea" id="RHEA:36631"/>
        <dbReference type="ChEBI" id="CHEBI:15378"/>
        <dbReference type="ChEBI" id="CHEBI:15379"/>
        <dbReference type="ChEBI" id="CHEBI:57870"/>
        <dbReference type="ChEBI" id="CHEBI:58033"/>
        <dbReference type="ChEBI" id="CHEBI:58272"/>
    </reaction>
</comment>
<comment type="cofactor">
    <cofactor evidence="1">
        <name>Mg(2+)</name>
        <dbReference type="ChEBI" id="CHEBI:18420"/>
    </cofactor>
    <text evidence="1">Binds 1 Mg(2+) ion per subunit.</text>
</comment>
<comment type="subunit">
    <text evidence="1">Heterohexadecamer of 8 large chains and 8 small chains; disulfide-linked. The disulfide link is formed within the large subunit homodimers.</text>
</comment>
<comment type="subcellular location">
    <subcellularLocation>
        <location>Plastid</location>
        <location>Chloroplast</location>
    </subcellularLocation>
</comment>
<comment type="PTM">
    <text evidence="1">The disulfide bond which can form in the large chain dimeric partners within the hexadecamer appears to be associated with oxidative stress and protein turnover.</text>
</comment>
<comment type="miscellaneous">
    <text evidence="1">The basic functional RuBisCO is composed of a large chain homodimer in a 'head-to-tail' conformation. In form I RuBisCO this homodimer is arranged in a barrel-like tetramer with the small subunits forming a tetrameric 'cap' on each end of the 'barrel'.</text>
</comment>
<comment type="similarity">
    <text evidence="1">Belongs to the RuBisCO large chain family. Type I subfamily.</text>
</comment>
<comment type="sequence caution" evidence="2">
    <conflict type="erroneous initiation">
        <sequence resource="EMBL-CDS" id="AAA70380"/>
    </conflict>
</comment>
<protein>
    <recommendedName>
        <fullName evidence="1">Ribulose bisphosphate carboxylase large chain</fullName>
        <shortName evidence="1">RuBisCO large subunit</shortName>
        <ecNumber evidence="1">4.1.1.39</ecNumber>
    </recommendedName>
</protein>
<keyword id="KW-0007">Acetylation</keyword>
<keyword id="KW-0113">Calvin cycle</keyword>
<keyword id="KW-0120">Carbon dioxide fixation</keyword>
<keyword id="KW-0150">Chloroplast</keyword>
<keyword id="KW-1015">Disulfide bond</keyword>
<keyword id="KW-0456">Lyase</keyword>
<keyword id="KW-0460">Magnesium</keyword>
<keyword id="KW-0479">Metal-binding</keyword>
<keyword id="KW-0488">Methylation</keyword>
<keyword id="KW-0503">Monooxygenase</keyword>
<keyword id="KW-0560">Oxidoreductase</keyword>
<keyword id="KW-0601">Photorespiration</keyword>
<keyword id="KW-0602">Photosynthesis</keyword>
<keyword id="KW-0934">Plastid</keyword>
<dbReference type="EC" id="4.1.1.39" evidence="1"/>
<dbReference type="EMBL" id="DQ923117">
    <property type="protein sequence ID" value="ABI49871.1"/>
    <property type="molecule type" value="Genomic_DNA"/>
</dbReference>
<dbReference type="EMBL" id="L75843">
    <property type="protein sequence ID" value="AAB63958.2"/>
    <property type="molecule type" value="Genomic_DNA"/>
</dbReference>
<dbReference type="EMBL" id="L37920">
    <property type="protein sequence ID" value="AAA70380.1"/>
    <property type="status" value="ALT_INIT"/>
    <property type="molecule type" value="Genomic_DNA"/>
</dbReference>
<dbReference type="RefSeq" id="YP_740658.1">
    <property type="nucleotide sequence ID" value="NC_008336.1"/>
</dbReference>
<dbReference type="SMR" id="O20241"/>
<dbReference type="GeneID" id="4271604"/>
<dbReference type="GO" id="GO:0009507">
    <property type="term" value="C:chloroplast"/>
    <property type="evidence" value="ECO:0007669"/>
    <property type="project" value="UniProtKB-SubCell"/>
</dbReference>
<dbReference type="GO" id="GO:0000287">
    <property type="term" value="F:magnesium ion binding"/>
    <property type="evidence" value="ECO:0007669"/>
    <property type="project" value="UniProtKB-UniRule"/>
</dbReference>
<dbReference type="GO" id="GO:0004497">
    <property type="term" value="F:monooxygenase activity"/>
    <property type="evidence" value="ECO:0007669"/>
    <property type="project" value="UniProtKB-KW"/>
</dbReference>
<dbReference type="GO" id="GO:0016984">
    <property type="term" value="F:ribulose-bisphosphate carboxylase activity"/>
    <property type="evidence" value="ECO:0007669"/>
    <property type="project" value="UniProtKB-UniRule"/>
</dbReference>
<dbReference type="GO" id="GO:0009853">
    <property type="term" value="P:photorespiration"/>
    <property type="evidence" value="ECO:0007669"/>
    <property type="project" value="UniProtKB-KW"/>
</dbReference>
<dbReference type="GO" id="GO:0019253">
    <property type="term" value="P:reductive pentose-phosphate cycle"/>
    <property type="evidence" value="ECO:0007669"/>
    <property type="project" value="UniProtKB-UniRule"/>
</dbReference>
<dbReference type="CDD" id="cd08212">
    <property type="entry name" value="RuBisCO_large_I"/>
    <property type="match status" value="1"/>
</dbReference>
<dbReference type="FunFam" id="3.20.20.110:FF:000001">
    <property type="entry name" value="Ribulose bisphosphate carboxylase large chain"/>
    <property type="match status" value="1"/>
</dbReference>
<dbReference type="FunFam" id="3.30.70.150:FF:000001">
    <property type="entry name" value="Ribulose bisphosphate carboxylase large chain"/>
    <property type="match status" value="1"/>
</dbReference>
<dbReference type="Gene3D" id="3.20.20.110">
    <property type="entry name" value="Ribulose bisphosphate carboxylase, large subunit, C-terminal domain"/>
    <property type="match status" value="1"/>
</dbReference>
<dbReference type="Gene3D" id="3.30.70.150">
    <property type="entry name" value="RuBisCO large subunit, N-terminal domain"/>
    <property type="match status" value="1"/>
</dbReference>
<dbReference type="HAMAP" id="MF_01338">
    <property type="entry name" value="RuBisCO_L_type1"/>
    <property type="match status" value="1"/>
</dbReference>
<dbReference type="InterPro" id="IPR033966">
    <property type="entry name" value="RuBisCO"/>
</dbReference>
<dbReference type="InterPro" id="IPR020878">
    <property type="entry name" value="RuBisCo_large_chain_AS"/>
</dbReference>
<dbReference type="InterPro" id="IPR000685">
    <property type="entry name" value="RuBisCO_lsu_C"/>
</dbReference>
<dbReference type="InterPro" id="IPR036376">
    <property type="entry name" value="RuBisCO_lsu_C_sf"/>
</dbReference>
<dbReference type="InterPro" id="IPR017443">
    <property type="entry name" value="RuBisCO_lsu_fd_N"/>
</dbReference>
<dbReference type="InterPro" id="IPR036422">
    <property type="entry name" value="RuBisCO_lsu_N_sf"/>
</dbReference>
<dbReference type="InterPro" id="IPR020888">
    <property type="entry name" value="RuBisCO_lsuI"/>
</dbReference>
<dbReference type="NCBIfam" id="NF003252">
    <property type="entry name" value="PRK04208.1"/>
    <property type="match status" value="1"/>
</dbReference>
<dbReference type="PANTHER" id="PTHR42704">
    <property type="entry name" value="RIBULOSE BISPHOSPHATE CARBOXYLASE"/>
    <property type="match status" value="1"/>
</dbReference>
<dbReference type="PANTHER" id="PTHR42704:SF15">
    <property type="entry name" value="RIBULOSE BISPHOSPHATE CARBOXYLASE LARGE CHAIN"/>
    <property type="match status" value="1"/>
</dbReference>
<dbReference type="Pfam" id="PF00016">
    <property type="entry name" value="RuBisCO_large"/>
    <property type="match status" value="1"/>
</dbReference>
<dbReference type="Pfam" id="PF02788">
    <property type="entry name" value="RuBisCO_large_N"/>
    <property type="match status" value="1"/>
</dbReference>
<dbReference type="SFLD" id="SFLDG01052">
    <property type="entry name" value="RuBisCO"/>
    <property type="match status" value="1"/>
</dbReference>
<dbReference type="SFLD" id="SFLDS00014">
    <property type="entry name" value="RuBisCO"/>
    <property type="match status" value="1"/>
</dbReference>
<dbReference type="SFLD" id="SFLDG00301">
    <property type="entry name" value="RuBisCO-like_proteins"/>
    <property type="match status" value="1"/>
</dbReference>
<dbReference type="SUPFAM" id="SSF51649">
    <property type="entry name" value="RuBisCo, C-terminal domain"/>
    <property type="match status" value="1"/>
</dbReference>
<dbReference type="SUPFAM" id="SSF54966">
    <property type="entry name" value="RuBisCO, large subunit, small (N-terminal) domain"/>
    <property type="match status" value="1"/>
</dbReference>
<dbReference type="PROSITE" id="PS00157">
    <property type="entry name" value="RUBISCO_LARGE"/>
    <property type="match status" value="1"/>
</dbReference>
<name>RBL_NANDO</name>
<organism>
    <name type="scientific">Nandina domestica</name>
    <name type="common">Heavenly bamboo</name>
    <dbReference type="NCBI Taxonomy" id="41776"/>
    <lineage>
        <taxon>Eukaryota</taxon>
        <taxon>Viridiplantae</taxon>
        <taxon>Streptophyta</taxon>
        <taxon>Embryophyta</taxon>
        <taxon>Tracheophyta</taxon>
        <taxon>Spermatophyta</taxon>
        <taxon>Magnoliopsida</taxon>
        <taxon>Ranunculales</taxon>
        <taxon>Berberidaceae</taxon>
        <taxon>Nandinoideae</taxon>
        <taxon>Nandineae</taxon>
        <taxon>Nandina</taxon>
    </lineage>
</organism>
<accession>O20241</accession>
<accession>Q09FV3</accession>
<accession>Q40391</accession>
<feature type="propeptide" id="PRO_0000262594" evidence="1">
    <location>
        <begin position="1"/>
        <end position="2"/>
    </location>
</feature>
<feature type="chain" id="PRO_0000062536" description="Ribulose bisphosphate carboxylase large chain">
    <location>
        <begin position="3"/>
        <end position="475"/>
    </location>
</feature>
<feature type="active site" description="Proton acceptor" evidence="1">
    <location>
        <position position="175"/>
    </location>
</feature>
<feature type="active site" description="Proton acceptor" evidence="1">
    <location>
        <position position="294"/>
    </location>
</feature>
<feature type="binding site" description="in homodimeric partner" evidence="1">
    <location>
        <position position="123"/>
    </location>
    <ligand>
        <name>substrate</name>
    </ligand>
</feature>
<feature type="binding site" evidence="1">
    <location>
        <position position="173"/>
    </location>
    <ligand>
        <name>substrate</name>
    </ligand>
</feature>
<feature type="binding site" evidence="1">
    <location>
        <position position="177"/>
    </location>
    <ligand>
        <name>substrate</name>
    </ligand>
</feature>
<feature type="binding site" description="via carbamate group" evidence="1">
    <location>
        <position position="201"/>
    </location>
    <ligand>
        <name>Mg(2+)</name>
        <dbReference type="ChEBI" id="CHEBI:18420"/>
    </ligand>
</feature>
<feature type="binding site" evidence="1">
    <location>
        <position position="203"/>
    </location>
    <ligand>
        <name>Mg(2+)</name>
        <dbReference type="ChEBI" id="CHEBI:18420"/>
    </ligand>
</feature>
<feature type="binding site" evidence="1">
    <location>
        <position position="204"/>
    </location>
    <ligand>
        <name>Mg(2+)</name>
        <dbReference type="ChEBI" id="CHEBI:18420"/>
    </ligand>
</feature>
<feature type="binding site" evidence="1">
    <location>
        <position position="295"/>
    </location>
    <ligand>
        <name>substrate</name>
    </ligand>
</feature>
<feature type="binding site" evidence="1">
    <location>
        <position position="327"/>
    </location>
    <ligand>
        <name>substrate</name>
    </ligand>
</feature>
<feature type="binding site" evidence="1">
    <location>
        <position position="379"/>
    </location>
    <ligand>
        <name>substrate</name>
    </ligand>
</feature>
<feature type="site" description="Transition state stabilizer" evidence="1">
    <location>
        <position position="334"/>
    </location>
</feature>
<feature type="modified residue" description="N-acetylproline" evidence="1">
    <location>
        <position position="3"/>
    </location>
</feature>
<feature type="modified residue" description="N6,N6,N6-trimethyllysine" evidence="1">
    <location>
        <position position="14"/>
    </location>
</feature>
<feature type="modified residue" description="N6-carboxylysine" evidence="1">
    <location>
        <position position="201"/>
    </location>
</feature>
<feature type="disulfide bond" description="Interchain; in linked form" evidence="1">
    <location>
        <position position="247"/>
    </location>
</feature>
<feature type="sequence conflict" description="In Ref. 3; AAA70380." evidence="2" ref="3">
    <original>N</original>
    <variation>T</variation>
    <location>
        <position position="23"/>
    </location>
</feature>
<feature type="sequence conflict" description="In Ref. 3; AAA70380." evidence="2" ref="3">
    <original>D</original>
    <variation>E</variation>
    <location>
        <position position="28"/>
    </location>
</feature>
<feature type="sequence conflict" description="In Ref. 3; AAA70380." evidence="2" ref="3">
    <original>T</original>
    <variation>S</variation>
    <location>
        <position position="279"/>
    </location>
</feature>
<feature type="sequence conflict" description="In Ref. 3; AAA70380." evidence="2" ref="3">
    <original>H</original>
    <variation>P</variation>
    <location>
        <position position="310"/>
    </location>
</feature>
<feature type="sequence conflict" description="In Ref. 2 and 3; AAA70380/AAB63958." evidence="2" ref="2 3">
    <original>A</original>
    <variation>E</variation>
    <location>
        <position position="447"/>
    </location>
</feature>
<feature type="sequence conflict" description="In Ref. 2 and 3; AAA70380/AAB63958." evidence="2" ref="2 3">
    <original>C</original>
    <variation>S</variation>
    <location>
        <position position="459"/>
    </location>
</feature>